<reference key="1">
    <citation type="submission" date="1993-10" db="EMBL/GenBank/DDBJ databases">
        <authorList>
            <person name="Stim K.P."/>
            <person name="Bennett G.N."/>
        </authorList>
    </citation>
    <scope>NUCLEOTIDE SEQUENCE [GENOMIC DNA]</scope>
    <source>
        <strain>K12</strain>
    </source>
</reference>
<reference key="2">
    <citation type="journal article" date="1995" name="Nucleic Acids Res.">
        <title>Analysis of the Escherichia coli genome VI: DNA sequence of the region from 92.8 through 100 minutes.</title>
        <authorList>
            <person name="Burland V.D."/>
            <person name="Plunkett G. III"/>
            <person name="Sofia H.J."/>
            <person name="Daniels D.L."/>
            <person name="Blattner F.R."/>
        </authorList>
    </citation>
    <scope>NUCLEOTIDE SEQUENCE [LARGE SCALE GENOMIC DNA]</scope>
    <source>
        <strain>K12 / MG1655 / ATCC 47076</strain>
    </source>
</reference>
<reference key="3">
    <citation type="journal article" date="1997" name="Science">
        <title>The complete genome sequence of Escherichia coli K-12.</title>
        <authorList>
            <person name="Blattner F.R."/>
            <person name="Plunkett G. III"/>
            <person name="Bloch C.A."/>
            <person name="Perna N.T."/>
            <person name="Burland V."/>
            <person name="Riley M."/>
            <person name="Collado-Vides J."/>
            <person name="Glasner J.D."/>
            <person name="Rode C.K."/>
            <person name="Mayhew G.F."/>
            <person name="Gregor J."/>
            <person name="Davis N.W."/>
            <person name="Kirkpatrick H.A."/>
            <person name="Goeden M.A."/>
            <person name="Rose D.J."/>
            <person name="Mau B."/>
            <person name="Shao Y."/>
        </authorList>
    </citation>
    <scope>NUCLEOTIDE SEQUENCE [LARGE SCALE GENOMIC DNA]</scope>
    <source>
        <strain>K12 / MG1655 / ATCC 47076</strain>
    </source>
</reference>
<reference key="4">
    <citation type="journal article" date="2006" name="Mol. Syst. Biol.">
        <title>Highly accurate genome sequences of Escherichia coli K-12 strains MG1655 and W3110.</title>
        <authorList>
            <person name="Hayashi K."/>
            <person name="Morooka N."/>
            <person name="Yamamoto Y."/>
            <person name="Fujita K."/>
            <person name="Isono K."/>
            <person name="Choi S."/>
            <person name="Ohtsubo E."/>
            <person name="Baba T."/>
            <person name="Wanner B.L."/>
            <person name="Mori H."/>
            <person name="Horiuchi T."/>
        </authorList>
    </citation>
    <scope>NUCLEOTIDE SEQUENCE [LARGE SCALE GENOMIC DNA]</scope>
    <source>
        <strain>K12 / W3110 / ATCC 27325 / DSM 5911</strain>
    </source>
</reference>
<reference key="5">
    <citation type="journal article" date="2003" name="J. Bacteriol.">
        <title>YjdE (AdiC) is the arginine:agmatine antiporter essential for arginine-dependent acid resistance in Escherichia coli.</title>
        <authorList>
            <person name="Gong S."/>
            <person name="Richard H."/>
            <person name="Foster J.W."/>
        </authorList>
    </citation>
    <scope>INDUCTION</scope>
    <scope>OPERON</scope>
    <scope>DISRUPTION PHENOTYPE</scope>
    <source>
        <strain>K12</strain>
    </source>
</reference>
<comment type="induction">
    <text evidence="2">By acidic conditions. Forms an operon with upstream adiA but not downstream adiC.</text>
</comment>
<comment type="disruption phenotype">
    <text evidence="2">No change in arginine-dependent acid resistance.</text>
</comment>
<name>ADIY_ECOLI</name>
<accession>P33234</accession>
<accession>Q2M6I8</accession>
<dbReference type="EMBL" id="U02384">
    <property type="protein sequence ID" value="AAB18143.1"/>
    <property type="molecule type" value="Unassigned_DNA"/>
</dbReference>
<dbReference type="EMBL" id="U14003">
    <property type="protein sequence ID" value="AAA97016.1"/>
    <property type="molecule type" value="Genomic_DNA"/>
</dbReference>
<dbReference type="EMBL" id="U00096">
    <property type="protein sequence ID" value="AAC77077.1"/>
    <property type="molecule type" value="Genomic_DNA"/>
</dbReference>
<dbReference type="EMBL" id="AP009048">
    <property type="protein sequence ID" value="BAE78118.1"/>
    <property type="molecule type" value="Genomic_DNA"/>
</dbReference>
<dbReference type="PIR" id="S56345">
    <property type="entry name" value="S56345"/>
</dbReference>
<dbReference type="RefSeq" id="NP_418540.1">
    <property type="nucleotide sequence ID" value="NC_000913.3"/>
</dbReference>
<dbReference type="RefSeq" id="WP_001217060.1">
    <property type="nucleotide sequence ID" value="NZ_SSZK01000018.1"/>
</dbReference>
<dbReference type="SMR" id="P33234"/>
<dbReference type="BioGRID" id="4263080">
    <property type="interactions" value="62"/>
</dbReference>
<dbReference type="FunCoup" id="P33234">
    <property type="interactions" value="20"/>
</dbReference>
<dbReference type="IntAct" id="P33234">
    <property type="interactions" value="2"/>
</dbReference>
<dbReference type="STRING" id="511145.b4116"/>
<dbReference type="PaxDb" id="511145-b4116"/>
<dbReference type="EnsemblBacteria" id="AAC77077">
    <property type="protein sequence ID" value="AAC77077"/>
    <property type="gene ID" value="b4116"/>
</dbReference>
<dbReference type="GeneID" id="948627"/>
<dbReference type="KEGG" id="ecj:JW4077"/>
<dbReference type="KEGG" id="eco:b4116"/>
<dbReference type="KEGG" id="ecoc:C3026_22240"/>
<dbReference type="PATRIC" id="fig|1411691.4.peg.2584"/>
<dbReference type="EchoBASE" id="EB1909"/>
<dbReference type="eggNOG" id="COG2207">
    <property type="taxonomic scope" value="Bacteria"/>
</dbReference>
<dbReference type="HOGENOM" id="CLU_000445_81_4_6"/>
<dbReference type="InParanoid" id="P33234"/>
<dbReference type="OMA" id="MIIRATQ"/>
<dbReference type="OrthoDB" id="9816344at2"/>
<dbReference type="PhylomeDB" id="P33234"/>
<dbReference type="BioCyc" id="EcoCyc:EG11966-MONOMER"/>
<dbReference type="PRO" id="PR:P33234"/>
<dbReference type="Proteomes" id="UP000000625">
    <property type="component" value="Chromosome"/>
</dbReference>
<dbReference type="GO" id="GO:0003700">
    <property type="term" value="F:DNA-binding transcription factor activity"/>
    <property type="evidence" value="ECO:0000314"/>
    <property type="project" value="EcoCyc"/>
</dbReference>
<dbReference type="GO" id="GO:0043565">
    <property type="term" value="F:sequence-specific DNA binding"/>
    <property type="evidence" value="ECO:0007669"/>
    <property type="project" value="InterPro"/>
</dbReference>
<dbReference type="GO" id="GO:0045893">
    <property type="term" value="P:positive regulation of DNA-templated transcription"/>
    <property type="evidence" value="ECO:0000314"/>
    <property type="project" value="EcoCyc"/>
</dbReference>
<dbReference type="FunFam" id="1.10.10.60:FF:000123">
    <property type="entry name" value="HTH-type transcriptional regulator AdiY"/>
    <property type="match status" value="1"/>
</dbReference>
<dbReference type="Gene3D" id="1.10.10.60">
    <property type="entry name" value="Homeodomain-like"/>
    <property type="match status" value="1"/>
</dbReference>
<dbReference type="InterPro" id="IPR009057">
    <property type="entry name" value="Homeodomain-like_sf"/>
</dbReference>
<dbReference type="InterPro" id="IPR018060">
    <property type="entry name" value="HTH_AraC"/>
</dbReference>
<dbReference type="InterPro" id="IPR018062">
    <property type="entry name" value="HTH_AraC-typ_CS"/>
</dbReference>
<dbReference type="InterPro" id="IPR020449">
    <property type="entry name" value="Tscrpt_reg_AraC-type_HTH"/>
</dbReference>
<dbReference type="PANTHER" id="PTHR43280">
    <property type="entry name" value="ARAC-FAMILY TRANSCRIPTIONAL REGULATOR"/>
    <property type="match status" value="1"/>
</dbReference>
<dbReference type="PANTHER" id="PTHR43280:SF20">
    <property type="entry name" value="HTH-TYPE TRANSCRIPTIONAL REGULATOR ADIY-RELATED"/>
    <property type="match status" value="1"/>
</dbReference>
<dbReference type="Pfam" id="PF12833">
    <property type="entry name" value="HTH_18"/>
    <property type="match status" value="1"/>
</dbReference>
<dbReference type="PRINTS" id="PR00032">
    <property type="entry name" value="HTHARAC"/>
</dbReference>
<dbReference type="SMART" id="SM00342">
    <property type="entry name" value="HTH_ARAC"/>
    <property type="match status" value="1"/>
</dbReference>
<dbReference type="SUPFAM" id="SSF46689">
    <property type="entry name" value="Homeodomain-like"/>
    <property type="match status" value="1"/>
</dbReference>
<dbReference type="PROSITE" id="PS00041">
    <property type="entry name" value="HTH_ARAC_FAMILY_1"/>
    <property type="match status" value="1"/>
</dbReference>
<dbReference type="PROSITE" id="PS01124">
    <property type="entry name" value="HTH_ARAC_FAMILY_2"/>
    <property type="match status" value="1"/>
</dbReference>
<sequence>MRICSDQPCIVLLTEKDVWIRVNGKEPISLKANHMALLNCENNIIDVSSLNNTLVAHISHDIIKDYLRFLNKDLSQIPVWQRSATPILTLPCLTPDVFRVAAQHSMMPAETESEKERTRALLFTVLSRFLDSKKFVSLMMYMLRNCVSDSVYQIIESDIHKDWNLSMVASCLCLSPSLLKKKLKSENTSYSQIITTCRMRYAVNELMMDGKNISQVSQSCGYNSTSYFISVFKDFYGMTPLHYVSQHRERTVA</sequence>
<evidence type="ECO:0000255" key="1">
    <source>
        <dbReference type="PROSITE-ProRule" id="PRU00593"/>
    </source>
</evidence>
<evidence type="ECO:0000269" key="2">
    <source>
    </source>
</evidence>
<protein>
    <recommendedName>
        <fullName>HTH-type transcriptional regulator AdiY</fullName>
    </recommendedName>
</protein>
<keyword id="KW-0238">DNA-binding</keyword>
<keyword id="KW-1185">Reference proteome</keyword>
<keyword id="KW-0804">Transcription</keyword>
<keyword id="KW-0805">Transcription regulation</keyword>
<proteinExistence type="evidence at transcript level"/>
<gene>
    <name type="primary">adiY</name>
    <name type="ordered locus">b4116</name>
    <name type="ordered locus">JW4077</name>
</gene>
<organism>
    <name type="scientific">Escherichia coli (strain K12)</name>
    <dbReference type="NCBI Taxonomy" id="83333"/>
    <lineage>
        <taxon>Bacteria</taxon>
        <taxon>Pseudomonadati</taxon>
        <taxon>Pseudomonadota</taxon>
        <taxon>Gammaproteobacteria</taxon>
        <taxon>Enterobacterales</taxon>
        <taxon>Enterobacteriaceae</taxon>
        <taxon>Escherichia</taxon>
    </lineage>
</organism>
<feature type="chain" id="PRO_0000194495" description="HTH-type transcriptional regulator AdiY">
    <location>
        <begin position="1"/>
        <end position="253"/>
    </location>
</feature>
<feature type="domain" description="HTH araC/xylS-type" evidence="1">
    <location>
        <begin position="149"/>
        <end position="246"/>
    </location>
</feature>
<feature type="DNA-binding region" description="H-T-H motif" evidence="1">
    <location>
        <begin position="166"/>
        <end position="187"/>
    </location>
</feature>
<feature type="DNA-binding region" description="H-T-H motif" evidence="1">
    <location>
        <begin position="213"/>
        <end position="236"/>
    </location>
</feature>